<evidence type="ECO:0000255" key="1">
    <source>
        <dbReference type="HAMAP-Rule" id="MF_00189"/>
    </source>
</evidence>
<comment type="function">
    <text evidence="1">Plays a role in cell envelope biogenesis, maintenance of cell envelope integrity and membrane homeostasis.</text>
</comment>
<comment type="subcellular location">
    <subcellularLocation>
        <location evidence="1">Cell inner membrane</location>
        <topology evidence="1">Multi-pass membrane protein</topology>
    </subcellularLocation>
</comment>
<comment type="similarity">
    <text evidence="1">Belongs to the YciB family.</text>
</comment>
<proteinExistence type="inferred from homology"/>
<gene>
    <name evidence="1" type="primary">yciB</name>
    <name type="ordered locus">YPDSF_0938</name>
</gene>
<protein>
    <recommendedName>
        <fullName evidence="1">Inner membrane-spanning protein YciB</fullName>
    </recommendedName>
</protein>
<reference key="1">
    <citation type="submission" date="2007-02" db="EMBL/GenBank/DDBJ databases">
        <title>Complete sequence of chromosome of Yersinia pestis Pestoides F.</title>
        <authorList>
            <consortium name="US DOE Joint Genome Institute"/>
            <person name="Copeland A."/>
            <person name="Lucas S."/>
            <person name="Lapidus A."/>
            <person name="Barry K."/>
            <person name="Detter J.C."/>
            <person name="Glavina del Rio T."/>
            <person name="Hammon N."/>
            <person name="Israni S."/>
            <person name="Dalin E."/>
            <person name="Tice H."/>
            <person name="Pitluck S."/>
            <person name="Di Bartolo G."/>
            <person name="Chain P."/>
            <person name="Malfatti S."/>
            <person name="Shin M."/>
            <person name="Vergez L."/>
            <person name="Schmutz J."/>
            <person name="Larimer F."/>
            <person name="Land M."/>
            <person name="Hauser L."/>
            <person name="Worsham P."/>
            <person name="Chu M."/>
            <person name="Bearden S."/>
            <person name="Garcia E."/>
            <person name="Richardson P."/>
        </authorList>
    </citation>
    <scope>NUCLEOTIDE SEQUENCE [LARGE SCALE GENOMIC DNA]</scope>
    <source>
        <strain>Pestoides F</strain>
    </source>
</reference>
<organism>
    <name type="scientific">Yersinia pestis (strain Pestoides F)</name>
    <dbReference type="NCBI Taxonomy" id="386656"/>
    <lineage>
        <taxon>Bacteria</taxon>
        <taxon>Pseudomonadati</taxon>
        <taxon>Pseudomonadota</taxon>
        <taxon>Gammaproteobacteria</taxon>
        <taxon>Enterobacterales</taxon>
        <taxon>Yersiniaceae</taxon>
        <taxon>Yersinia</taxon>
    </lineage>
</organism>
<sequence length="180" mass="20875">MKQLLDFLPLVVFFIFYKMYDIFVASGALIVATLVALAFTWLKYRKVEKMTLVTAAMVLVFGTLTLAFHSDLFIKWKVTVLYVLFALALLVSQWVMKKPLIQRMLGKELTLPDKVWSTLNLSWAIFFLVCGLLNIYVAFWLPQDIWVNFKVFGLTALTLIFTLISGVYIYRHMPEEQKKS</sequence>
<name>YCIB_YERPP</name>
<feature type="chain" id="PRO_1000021077" description="Inner membrane-spanning protein YciB">
    <location>
        <begin position="1"/>
        <end position="180"/>
    </location>
</feature>
<feature type="transmembrane region" description="Helical" evidence="1">
    <location>
        <begin position="22"/>
        <end position="42"/>
    </location>
</feature>
<feature type="transmembrane region" description="Helical" evidence="1">
    <location>
        <begin position="50"/>
        <end position="70"/>
    </location>
</feature>
<feature type="transmembrane region" description="Helical" evidence="1">
    <location>
        <begin position="72"/>
        <end position="92"/>
    </location>
</feature>
<feature type="transmembrane region" description="Helical" evidence="1">
    <location>
        <begin position="121"/>
        <end position="141"/>
    </location>
</feature>
<feature type="transmembrane region" description="Helical" evidence="1">
    <location>
        <begin position="149"/>
        <end position="169"/>
    </location>
</feature>
<dbReference type="EMBL" id="CP000668">
    <property type="protein sequence ID" value="ABP39338.1"/>
    <property type="molecule type" value="Genomic_DNA"/>
</dbReference>
<dbReference type="RefSeq" id="WP_002210640.1">
    <property type="nucleotide sequence ID" value="NZ_CP009715.1"/>
</dbReference>
<dbReference type="KEGG" id="ypp:YPDSF_0938"/>
<dbReference type="PATRIC" id="fig|386656.14.peg.2913"/>
<dbReference type="GO" id="GO:0005886">
    <property type="term" value="C:plasma membrane"/>
    <property type="evidence" value="ECO:0007669"/>
    <property type="project" value="UniProtKB-SubCell"/>
</dbReference>
<dbReference type="HAMAP" id="MF_00189">
    <property type="entry name" value="YciB"/>
    <property type="match status" value="1"/>
</dbReference>
<dbReference type="InterPro" id="IPR006008">
    <property type="entry name" value="YciB"/>
</dbReference>
<dbReference type="NCBIfam" id="TIGR00997">
    <property type="entry name" value="ispZ"/>
    <property type="match status" value="1"/>
</dbReference>
<dbReference type="NCBIfam" id="NF001324">
    <property type="entry name" value="PRK00259.1-2"/>
    <property type="match status" value="1"/>
</dbReference>
<dbReference type="NCBIfam" id="NF001325">
    <property type="entry name" value="PRK00259.1-3"/>
    <property type="match status" value="1"/>
</dbReference>
<dbReference type="NCBIfam" id="NF001326">
    <property type="entry name" value="PRK00259.1-4"/>
    <property type="match status" value="1"/>
</dbReference>
<dbReference type="PANTHER" id="PTHR36917:SF1">
    <property type="entry name" value="INNER MEMBRANE-SPANNING PROTEIN YCIB"/>
    <property type="match status" value="1"/>
</dbReference>
<dbReference type="PANTHER" id="PTHR36917">
    <property type="entry name" value="INTRACELLULAR SEPTATION PROTEIN A-RELATED"/>
    <property type="match status" value="1"/>
</dbReference>
<dbReference type="Pfam" id="PF04279">
    <property type="entry name" value="IspA"/>
    <property type="match status" value="1"/>
</dbReference>
<keyword id="KW-0997">Cell inner membrane</keyword>
<keyword id="KW-1003">Cell membrane</keyword>
<keyword id="KW-0472">Membrane</keyword>
<keyword id="KW-0812">Transmembrane</keyword>
<keyword id="KW-1133">Transmembrane helix</keyword>
<accession>A4TJ76</accession>